<comment type="function">
    <text evidence="1">DNA-dependent RNA polymerase catalyzes the transcription of DNA into RNA using the four ribonucleoside triphosphates as substrates.</text>
</comment>
<comment type="catalytic activity">
    <reaction evidence="1">
        <text>RNA(n) + a ribonucleoside 5'-triphosphate = RNA(n+1) + diphosphate</text>
        <dbReference type="Rhea" id="RHEA:21248"/>
        <dbReference type="Rhea" id="RHEA-COMP:14527"/>
        <dbReference type="Rhea" id="RHEA-COMP:17342"/>
        <dbReference type="ChEBI" id="CHEBI:33019"/>
        <dbReference type="ChEBI" id="CHEBI:61557"/>
        <dbReference type="ChEBI" id="CHEBI:140395"/>
        <dbReference type="EC" id="2.7.7.6"/>
    </reaction>
</comment>
<comment type="subunit">
    <text evidence="1">The RNAP catalytic core consists of 2 alpha, 1 beta, 1 beta' and 1 omega subunit. When a sigma factor is associated with the core the holoenzyme is formed, which can initiate transcription.</text>
</comment>
<comment type="similarity">
    <text evidence="1">Belongs to the RNA polymerase beta chain family.</text>
</comment>
<keyword id="KW-0240">DNA-directed RNA polymerase</keyword>
<keyword id="KW-0548">Nucleotidyltransferase</keyword>
<keyword id="KW-0804">Transcription</keyword>
<keyword id="KW-0808">Transferase</keyword>
<protein>
    <recommendedName>
        <fullName evidence="1">DNA-directed RNA polymerase subunit beta</fullName>
        <shortName evidence="1">RNAP subunit beta</shortName>
        <ecNumber evidence="1">2.7.7.6</ecNumber>
    </recommendedName>
    <alternativeName>
        <fullName evidence="1">RNA polymerase subunit beta</fullName>
    </alternativeName>
    <alternativeName>
        <fullName evidence="1">Transcriptase subunit beta</fullName>
    </alternativeName>
</protein>
<gene>
    <name evidence="1" type="primary">rpoB</name>
    <name type="ordered locus">Cag_0357</name>
</gene>
<feature type="chain" id="PRO_0000224045" description="DNA-directed RNA polymerase subunit beta">
    <location>
        <begin position="1"/>
        <end position="1300"/>
    </location>
</feature>
<reference key="1">
    <citation type="submission" date="2005-08" db="EMBL/GenBank/DDBJ databases">
        <title>Complete sequence of Chlorobium chlorochromatii CaD3.</title>
        <authorList>
            <consortium name="US DOE Joint Genome Institute"/>
            <person name="Copeland A."/>
            <person name="Lucas S."/>
            <person name="Lapidus A."/>
            <person name="Barry K."/>
            <person name="Detter J.C."/>
            <person name="Glavina T."/>
            <person name="Hammon N."/>
            <person name="Israni S."/>
            <person name="Pitluck S."/>
            <person name="Bryant D."/>
            <person name="Schmutz J."/>
            <person name="Larimer F."/>
            <person name="Land M."/>
            <person name="Kyrpides N."/>
            <person name="Ivanova N."/>
            <person name="Richardson P."/>
        </authorList>
    </citation>
    <scope>NUCLEOTIDE SEQUENCE [LARGE SCALE GENOMIC DNA]</scope>
    <source>
        <strain>CaD3</strain>
    </source>
</reference>
<evidence type="ECO:0000255" key="1">
    <source>
        <dbReference type="HAMAP-Rule" id="MF_01321"/>
    </source>
</evidence>
<sequence length="1300" mass="145666">MADATTSRIDFSKIKSIINSPDLLKVQLDSFHNFIQDSVPLAKRKDQGLERVLRGAFPITDTRGLYLLEYISYAFDKPKYTVEECIERGLTYDVSLKVKLKLSYKDEADEPDWKETIQQEVYLGRIPYMTERGTFIVNGAERVVVAQLHRSPGVVFSEAVHPNGKKMFSAKIVPTRGSWIEFQTDINNQIFVYIDQKKNFLVTALLRAIGFARDEDILALFDLVEEVSLKASKREQLVGQYLASDIVDMQTGEVISARTAITEEIFEQILLAGYKSIKVMKSFSNNEKGMDKSVIINTILNDSSATEEEALEIVYEELRANEAPDIEAARSFLERTFFNQKKYDLGDVGRYRIKKKLRREFEELYSFIGEKPELKALSDTIEEKILQTIQTYSDEPIGEDILVLTHYDIIAVIYYLIKLVNGQAEVDDVDHLANRRVRSVGEQLAAQFVVGLARMGKNVREKLNSRDSDKIAPSDLINARTVSSVVSSFFATSQLSQFMDQTNPLAEMTNKRRVSALGPGGLTRERAGFEVRDVHYTHYGRLCPIETPEGPNIGLISSLSVYAEINDKGFIQTPYRLVDNGQVTDTVVMLSAEDEENKITVPVSIPLDENNRIAVETVQARTKGDYPVVAATDVHYMDVSPVQIVSAAAALIPFLEHDDGNRALMGANMQRQAVPLLTSDAPVVGTGMEGKVARDSRAVIVAEGPGEVVDVTADYIQVRYQLDADNNLRLSMLDPDEGLKTYKLIKFKRSNQDTCISQKPLVRIGDKVEKNTVLADSSSTEYGELALGKNVLVAFMPWRGYNFEDAIILSERLVYDDVFTSIHIHEFEANVRDTKRGEEQFTRDIYNVSEEALRNLDENGIVRCGAEVKERDILVGKITPKGESDPTPEEKLLRAIFGDKSSDVKDASMHVPAGMKGIIIKTKLFSRKKKIGLDIKEKIELLDKQFAAKEYDLRKRFAKWLKHFLDGKTSTGVYNDKGKVVVPEGTVFEESVLAKFATAQFLESVDLSRGVVSSDKTNKNVTRLIKEFRFLLKDIADERENEKYKVNVGDELPPGIEELAKVYIAQKRKIQVGDKMAGRHGNKGVVGKILPVEDMPFMADGTPVDIVLNPLGVPSRMNIGQLYETSLGWAAKKLGVKFKTPIFNGATYEEVQRELERAGLPTHGKVSLFDGRTGERFDDEVTVGYIYMLKLSHLVDDKIHARSTGPYSLITQQPLGGKAQFGGQRFGEMEVWALEAYGASNILREMLTVKSDDVVGRNKTYEAIVKGQNLPEPGIPESFNVLVRELQGLGLEIRIDDKVP</sequence>
<organism>
    <name type="scientific">Chlorobium chlorochromatii (strain CaD3)</name>
    <dbReference type="NCBI Taxonomy" id="340177"/>
    <lineage>
        <taxon>Bacteria</taxon>
        <taxon>Pseudomonadati</taxon>
        <taxon>Chlorobiota</taxon>
        <taxon>Chlorobiia</taxon>
        <taxon>Chlorobiales</taxon>
        <taxon>Chlorobiaceae</taxon>
        <taxon>Chlorobium/Pelodictyon group</taxon>
        <taxon>Chlorobium</taxon>
    </lineage>
</organism>
<accession>Q3ATP5</accession>
<proteinExistence type="inferred from homology"/>
<name>RPOB_CHLCH</name>
<dbReference type="EC" id="2.7.7.6" evidence="1"/>
<dbReference type="EMBL" id="CP000108">
    <property type="protein sequence ID" value="ABB27630.1"/>
    <property type="molecule type" value="Genomic_DNA"/>
</dbReference>
<dbReference type="SMR" id="Q3ATP5"/>
<dbReference type="STRING" id="340177.Cag_0357"/>
<dbReference type="KEGG" id="cch:Cag_0357"/>
<dbReference type="eggNOG" id="COG0085">
    <property type="taxonomic scope" value="Bacteria"/>
</dbReference>
<dbReference type="HOGENOM" id="CLU_000524_4_1_10"/>
<dbReference type="GO" id="GO:0000428">
    <property type="term" value="C:DNA-directed RNA polymerase complex"/>
    <property type="evidence" value="ECO:0007669"/>
    <property type="project" value="UniProtKB-KW"/>
</dbReference>
<dbReference type="GO" id="GO:0003677">
    <property type="term" value="F:DNA binding"/>
    <property type="evidence" value="ECO:0007669"/>
    <property type="project" value="UniProtKB-UniRule"/>
</dbReference>
<dbReference type="GO" id="GO:0003899">
    <property type="term" value="F:DNA-directed RNA polymerase activity"/>
    <property type="evidence" value="ECO:0007669"/>
    <property type="project" value="UniProtKB-UniRule"/>
</dbReference>
<dbReference type="GO" id="GO:0032549">
    <property type="term" value="F:ribonucleoside binding"/>
    <property type="evidence" value="ECO:0007669"/>
    <property type="project" value="InterPro"/>
</dbReference>
<dbReference type="GO" id="GO:0006351">
    <property type="term" value="P:DNA-templated transcription"/>
    <property type="evidence" value="ECO:0007669"/>
    <property type="project" value="UniProtKB-UniRule"/>
</dbReference>
<dbReference type="CDD" id="cd00653">
    <property type="entry name" value="RNA_pol_B_RPB2"/>
    <property type="match status" value="1"/>
</dbReference>
<dbReference type="Gene3D" id="2.40.50.100">
    <property type="match status" value="1"/>
</dbReference>
<dbReference type="Gene3D" id="2.40.50.150">
    <property type="match status" value="1"/>
</dbReference>
<dbReference type="Gene3D" id="3.90.1100.10">
    <property type="match status" value="1"/>
</dbReference>
<dbReference type="Gene3D" id="2.30.150.10">
    <property type="entry name" value="DNA-directed RNA polymerase, beta subunit, external 1 domain"/>
    <property type="match status" value="1"/>
</dbReference>
<dbReference type="Gene3D" id="2.40.270.10">
    <property type="entry name" value="DNA-directed RNA polymerase, subunit 2, domain 6"/>
    <property type="match status" value="2"/>
</dbReference>
<dbReference type="Gene3D" id="3.90.1800.10">
    <property type="entry name" value="RNA polymerase alpha subunit dimerisation domain"/>
    <property type="match status" value="1"/>
</dbReference>
<dbReference type="Gene3D" id="3.90.1110.10">
    <property type="entry name" value="RNA polymerase Rpb2, domain 2"/>
    <property type="match status" value="1"/>
</dbReference>
<dbReference type="HAMAP" id="MF_01321">
    <property type="entry name" value="RNApol_bact_RpoB"/>
    <property type="match status" value="1"/>
</dbReference>
<dbReference type="InterPro" id="IPR042107">
    <property type="entry name" value="DNA-dir_RNA_pol_bsu_ext_1_sf"/>
</dbReference>
<dbReference type="InterPro" id="IPR019462">
    <property type="entry name" value="DNA-dir_RNA_pol_bsu_external_1"/>
</dbReference>
<dbReference type="InterPro" id="IPR015712">
    <property type="entry name" value="DNA-dir_RNA_pol_su2"/>
</dbReference>
<dbReference type="InterPro" id="IPR007120">
    <property type="entry name" value="DNA-dir_RNAP_su2_dom"/>
</dbReference>
<dbReference type="InterPro" id="IPR037033">
    <property type="entry name" value="DNA-dir_RNAP_su2_hyb_sf"/>
</dbReference>
<dbReference type="InterPro" id="IPR010243">
    <property type="entry name" value="RNA_pol_bsu_bac"/>
</dbReference>
<dbReference type="InterPro" id="IPR007121">
    <property type="entry name" value="RNA_pol_bsu_CS"/>
</dbReference>
<dbReference type="InterPro" id="IPR007644">
    <property type="entry name" value="RNA_pol_bsu_protrusion"/>
</dbReference>
<dbReference type="InterPro" id="IPR007642">
    <property type="entry name" value="RNA_pol_Rpb2_2"/>
</dbReference>
<dbReference type="InterPro" id="IPR037034">
    <property type="entry name" value="RNA_pol_Rpb2_2_sf"/>
</dbReference>
<dbReference type="InterPro" id="IPR007645">
    <property type="entry name" value="RNA_pol_Rpb2_3"/>
</dbReference>
<dbReference type="InterPro" id="IPR007641">
    <property type="entry name" value="RNA_pol_Rpb2_7"/>
</dbReference>
<dbReference type="InterPro" id="IPR014724">
    <property type="entry name" value="RNA_pol_RPB2_OB-fold"/>
</dbReference>
<dbReference type="NCBIfam" id="NF001616">
    <property type="entry name" value="PRK00405.1"/>
    <property type="match status" value="1"/>
</dbReference>
<dbReference type="NCBIfam" id="TIGR02013">
    <property type="entry name" value="rpoB"/>
    <property type="match status" value="1"/>
</dbReference>
<dbReference type="PANTHER" id="PTHR20856">
    <property type="entry name" value="DNA-DIRECTED RNA POLYMERASE I SUBUNIT 2"/>
    <property type="match status" value="1"/>
</dbReference>
<dbReference type="Pfam" id="PF04563">
    <property type="entry name" value="RNA_pol_Rpb2_1"/>
    <property type="match status" value="1"/>
</dbReference>
<dbReference type="Pfam" id="PF04561">
    <property type="entry name" value="RNA_pol_Rpb2_2"/>
    <property type="match status" value="3"/>
</dbReference>
<dbReference type="Pfam" id="PF04565">
    <property type="entry name" value="RNA_pol_Rpb2_3"/>
    <property type="match status" value="1"/>
</dbReference>
<dbReference type="Pfam" id="PF10385">
    <property type="entry name" value="RNA_pol_Rpb2_45"/>
    <property type="match status" value="1"/>
</dbReference>
<dbReference type="Pfam" id="PF00562">
    <property type="entry name" value="RNA_pol_Rpb2_6"/>
    <property type="match status" value="1"/>
</dbReference>
<dbReference type="Pfam" id="PF04560">
    <property type="entry name" value="RNA_pol_Rpb2_7"/>
    <property type="match status" value="1"/>
</dbReference>
<dbReference type="SUPFAM" id="SSF64484">
    <property type="entry name" value="beta and beta-prime subunits of DNA dependent RNA-polymerase"/>
    <property type="match status" value="1"/>
</dbReference>
<dbReference type="PROSITE" id="PS01166">
    <property type="entry name" value="RNA_POL_BETA"/>
    <property type="match status" value="1"/>
</dbReference>